<sequence length="247" mass="27523">MYKLVLIRHGESTWNLENRFTGWTDVDLTATGVEQAKNAGRLLKAEGYDFDLAYTSVLKRATRTLWHTLDEMDRTWLPVQHSWRLNERHYGGLQGLNKADMAKQYGDAQVLVWRRSYDTPPPALEPQDPRSERSDVRYAQLDPSQVPLTECLKDTVARVLPFWNESIAPAILSGKRVVVAAHGNSIRALIKYLDGISDDAIVGVNVPNGIPLVYELDANLKPIRHYYLGDAEAAAKAAAAVAAQGKA</sequence>
<protein>
    <recommendedName>
        <fullName evidence="1">2,3-bisphosphoglycerate-dependent phosphoglycerate mutase</fullName>
        <shortName evidence="1">BPG-dependent PGAM</shortName>
        <shortName evidence="1">PGAM</shortName>
        <shortName evidence="1">Phosphoglyceromutase</shortName>
        <shortName evidence="1">dPGM</shortName>
        <ecNumber evidence="1">5.4.2.11</ecNumber>
    </recommendedName>
</protein>
<reference key="1">
    <citation type="submission" date="2007-11" db="EMBL/GenBank/DDBJ databases">
        <title>Complete sequence of Delftia acidovorans DSM 14801 / SPH-1.</title>
        <authorList>
            <person name="Copeland A."/>
            <person name="Lucas S."/>
            <person name="Lapidus A."/>
            <person name="Barry K."/>
            <person name="Glavina del Rio T."/>
            <person name="Dalin E."/>
            <person name="Tice H."/>
            <person name="Pitluck S."/>
            <person name="Lowry S."/>
            <person name="Clum A."/>
            <person name="Schmutz J."/>
            <person name="Larimer F."/>
            <person name="Land M."/>
            <person name="Hauser L."/>
            <person name="Kyrpides N."/>
            <person name="Kim E."/>
            <person name="Schleheck D."/>
            <person name="Richardson P."/>
        </authorList>
    </citation>
    <scope>NUCLEOTIDE SEQUENCE [LARGE SCALE GENOMIC DNA]</scope>
    <source>
        <strain>DSM 14801 / SPH-1</strain>
    </source>
</reference>
<organism>
    <name type="scientific">Delftia acidovorans (strain DSM 14801 / SPH-1)</name>
    <dbReference type="NCBI Taxonomy" id="398578"/>
    <lineage>
        <taxon>Bacteria</taxon>
        <taxon>Pseudomonadati</taxon>
        <taxon>Pseudomonadota</taxon>
        <taxon>Betaproteobacteria</taxon>
        <taxon>Burkholderiales</taxon>
        <taxon>Comamonadaceae</taxon>
        <taxon>Delftia</taxon>
    </lineage>
</organism>
<accession>A9BUZ3</accession>
<comment type="function">
    <text evidence="1">Catalyzes the interconversion of 2-phosphoglycerate and 3-phosphoglycerate.</text>
</comment>
<comment type="catalytic activity">
    <reaction evidence="1">
        <text>(2R)-2-phosphoglycerate = (2R)-3-phosphoglycerate</text>
        <dbReference type="Rhea" id="RHEA:15901"/>
        <dbReference type="ChEBI" id="CHEBI:58272"/>
        <dbReference type="ChEBI" id="CHEBI:58289"/>
        <dbReference type="EC" id="5.4.2.11"/>
    </reaction>
</comment>
<comment type="pathway">
    <text evidence="1">Carbohydrate degradation; glycolysis; pyruvate from D-glyceraldehyde 3-phosphate: step 3/5.</text>
</comment>
<comment type="subunit">
    <text evidence="1">Homodimer.</text>
</comment>
<comment type="similarity">
    <text evidence="1">Belongs to the phosphoglycerate mutase family. BPG-dependent PGAM subfamily.</text>
</comment>
<evidence type="ECO:0000255" key="1">
    <source>
        <dbReference type="HAMAP-Rule" id="MF_01039"/>
    </source>
</evidence>
<dbReference type="EC" id="5.4.2.11" evidence="1"/>
<dbReference type="EMBL" id="CP000884">
    <property type="protein sequence ID" value="ABX34455.1"/>
    <property type="molecule type" value="Genomic_DNA"/>
</dbReference>
<dbReference type="RefSeq" id="WP_012203740.1">
    <property type="nucleotide sequence ID" value="NC_010002.1"/>
</dbReference>
<dbReference type="SMR" id="A9BUZ3"/>
<dbReference type="STRING" id="398578.Daci_1813"/>
<dbReference type="GeneID" id="24113805"/>
<dbReference type="KEGG" id="dac:Daci_1813"/>
<dbReference type="eggNOG" id="COG0588">
    <property type="taxonomic scope" value="Bacteria"/>
</dbReference>
<dbReference type="HOGENOM" id="CLU_033323_1_1_4"/>
<dbReference type="UniPathway" id="UPA00109">
    <property type="reaction ID" value="UER00186"/>
</dbReference>
<dbReference type="Proteomes" id="UP000000784">
    <property type="component" value="Chromosome"/>
</dbReference>
<dbReference type="GO" id="GO:0004619">
    <property type="term" value="F:phosphoglycerate mutase activity"/>
    <property type="evidence" value="ECO:0007669"/>
    <property type="project" value="UniProtKB-EC"/>
</dbReference>
<dbReference type="GO" id="GO:0006094">
    <property type="term" value="P:gluconeogenesis"/>
    <property type="evidence" value="ECO:0007669"/>
    <property type="project" value="UniProtKB-UniRule"/>
</dbReference>
<dbReference type="GO" id="GO:0006096">
    <property type="term" value="P:glycolytic process"/>
    <property type="evidence" value="ECO:0007669"/>
    <property type="project" value="UniProtKB-UniRule"/>
</dbReference>
<dbReference type="CDD" id="cd07067">
    <property type="entry name" value="HP_PGM_like"/>
    <property type="match status" value="1"/>
</dbReference>
<dbReference type="FunFam" id="3.40.50.1240:FF:000003">
    <property type="entry name" value="2,3-bisphosphoglycerate-dependent phosphoglycerate mutase"/>
    <property type="match status" value="1"/>
</dbReference>
<dbReference type="Gene3D" id="3.40.50.1240">
    <property type="entry name" value="Phosphoglycerate mutase-like"/>
    <property type="match status" value="1"/>
</dbReference>
<dbReference type="HAMAP" id="MF_01039">
    <property type="entry name" value="PGAM_GpmA"/>
    <property type="match status" value="1"/>
</dbReference>
<dbReference type="InterPro" id="IPR013078">
    <property type="entry name" value="His_Pase_superF_clade-1"/>
</dbReference>
<dbReference type="InterPro" id="IPR029033">
    <property type="entry name" value="His_PPase_superfam"/>
</dbReference>
<dbReference type="InterPro" id="IPR001345">
    <property type="entry name" value="PG/BPGM_mutase_AS"/>
</dbReference>
<dbReference type="InterPro" id="IPR005952">
    <property type="entry name" value="Phosphogly_mut1"/>
</dbReference>
<dbReference type="NCBIfam" id="TIGR01258">
    <property type="entry name" value="pgm_1"/>
    <property type="match status" value="1"/>
</dbReference>
<dbReference type="NCBIfam" id="NF010713">
    <property type="entry name" value="PRK14115.1"/>
    <property type="match status" value="1"/>
</dbReference>
<dbReference type="PANTHER" id="PTHR11931">
    <property type="entry name" value="PHOSPHOGLYCERATE MUTASE"/>
    <property type="match status" value="1"/>
</dbReference>
<dbReference type="Pfam" id="PF00300">
    <property type="entry name" value="His_Phos_1"/>
    <property type="match status" value="1"/>
</dbReference>
<dbReference type="PIRSF" id="PIRSF000709">
    <property type="entry name" value="6PFK_2-Ptase"/>
    <property type="match status" value="1"/>
</dbReference>
<dbReference type="SMART" id="SM00855">
    <property type="entry name" value="PGAM"/>
    <property type="match status" value="1"/>
</dbReference>
<dbReference type="SUPFAM" id="SSF53254">
    <property type="entry name" value="Phosphoglycerate mutase-like"/>
    <property type="match status" value="1"/>
</dbReference>
<dbReference type="PROSITE" id="PS00175">
    <property type="entry name" value="PG_MUTASE"/>
    <property type="match status" value="1"/>
</dbReference>
<name>GPMA_DELAS</name>
<feature type="chain" id="PRO_1000135941" description="2,3-bisphosphoglycerate-dependent phosphoglycerate mutase">
    <location>
        <begin position="1"/>
        <end position="247"/>
    </location>
</feature>
<feature type="active site" description="Tele-phosphohistidine intermediate" evidence="1">
    <location>
        <position position="9"/>
    </location>
</feature>
<feature type="active site" description="Proton donor/acceptor" evidence="1">
    <location>
        <position position="87"/>
    </location>
</feature>
<feature type="binding site" evidence="1">
    <location>
        <begin position="8"/>
        <end position="15"/>
    </location>
    <ligand>
        <name>substrate</name>
    </ligand>
</feature>
<feature type="binding site" evidence="1">
    <location>
        <begin position="21"/>
        <end position="22"/>
    </location>
    <ligand>
        <name>substrate</name>
    </ligand>
</feature>
<feature type="binding site" evidence="1">
    <location>
        <position position="60"/>
    </location>
    <ligand>
        <name>substrate</name>
    </ligand>
</feature>
<feature type="binding site" evidence="1">
    <location>
        <begin position="87"/>
        <end position="90"/>
    </location>
    <ligand>
        <name>substrate</name>
    </ligand>
</feature>
<feature type="binding site" evidence="1">
    <location>
        <position position="98"/>
    </location>
    <ligand>
        <name>substrate</name>
    </ligand>
</feature>
<feature type="binding site" evidence="1">
    <location>
        <begin position="114"/>
        <end position="115"/>
    </location>
    <ligand>
        <name>substrate</name>
    </ligand>
</feature>
<feature type="binding site" evidence="1">
    <location>
        <begin position="183"/>
        <end position="184"/>
    </location>
    <ligand>
        <name>substrate</name>
    </ligand>
</feature>
<feature type="site" description="Transition state stabilizer" evidence="1">
    <location>
        <position position="182"/>
    </location>
</feature>
<keyword id="KW-0312">Gluconeogenesis</keyword>
<keyword id="KW-0324">Glycolysis</keyword>
<keyword id="KW-0413">Isomerase</keyword>
<keyword id="KW-1185">Reference proteome</keyword>
<proteinExistence type="inferred from homology"/>
<gene>
    <name evidence="1" type="primary">gpmA</name>
    <name type="ordered locus">Daci_1813</name>
</gene>